<keyword id="KW-1185">Reference proteome</keyword>
<keyword id="KW-0687">Ribonucleoprotein</keyword>
<keyword id="KW-0689">Ribosomal protein</keyword>
<reference key="1">
    <citation type="journal article" date="2002" name="Nature">
        <title>Modulation of virulence within a pathogenicity island in vancomycin-resistant Enterococcus faecalis.</title>
        <authorList>
            <person name="Shankar N."/>
            <person name="Baghdayan A.S."/>
            <person name="Gilmore M.S."/>
        </authorList>
    </citation>
    <scope>NUCLEOTIDE SEQUENCE [GENOMIC DNA]</scope>
</reference>
<reference key="2">
    <citation type="journal article" date="2003" name="Science">
        <title>Role of mobile DNA in the evolution of vancomycin-resistant Enterococcus faecalis.</title>
        <authorList>
            <person name="Paulsen I.T."/>
            <person name="Banerjei L."/>
            <person name="Myers G.S.A."/>
            <person name="Nelson K.E."/>
            <person name="Seshadri R."/>
            <person name="Read T.D."/>
            <person name="Fouts D.E."/>
            <person name="Eisen J.A."/>
            <person name="Gill S.R."/>
            <person name="Heidelberg J.F."/>
            <person name="Tettelin H."/>
            <person name="Dodson R.J."/>
            <person name="Umayam L.A."/>
            <person name="Brinkac L.M."/>
            <person name="Beanan M.J."/>
            <person name="Daugherty S.C."/>
            <person name="DeBoy R.T."/>
            <person name="Durkin S.A."/>
            <person name="Kolonay J.F."/>
            <person name="Madupu R."/>
            <person name="Nelson W.C."/>
            <person name="Vamathevan J.J."/>
            <person name="Tran B."/>
            <person name="Upton J."/>
            <person name="Hansen T."/>
            <person name="Shetty J."/>
            <person name="Khouri H.M."/>
            <person name="Utterback T.R."/>
            <person name="Radune D."/>
            <person name="Ketchum K.A."/>
            <person name="Dougherty B.A."/>
            <person name="Fraser C.M."/>
        </authorList>
    </citation>
    <scope>NUCLEOTIDE SEQUENCE [LARGE SCALE GENOMIC DNA]</scope>
    <source>
        <strain>ATCC 700802 / V583</strain>
    </source>
</reference>
<organism>
    <name type="scientific">Enterococcus faecalis (strain ATCC 700802 / V583)</name>
    <dbReference type="NCBI Taxonomy" id="226185"/>
    <lineage>
        <taxon>Bacteria</taxon>
        <taxon>Bacillati</taxon>
        <taxon>Bacillota</taxon>
        <taxon>Bacilli</taxon>
        <taxon>Lactobacillales</taxon>
        <taxon>Enterococcaceae</taxon>
        <taxon>Enterococcus</taxon>
    </lineage>
</organism>
<gene>
    <name type="primary">rpmF1</name>
    <name type="synonym">rpmF-1</name>
    <name type="ordered locus">EF_0544</name>
    <name type="ORF">ef-0071</name>
</gene>
<feature type="chain" id="PRO_0000172340" description="Large ribosomal subunit protein bL32A">
    <location>
        <begin position="1"/>
        <end position="57"/>
    </location>
</feature>
<feature type="region of interest" description="Disordered" evidence="2">
    <location>
        <begin position="1"/>
        <end position="22"/>
    </location>
</feature>
<feature type="compositionally biased region" description="Basic residues" evidence="2">
    <location>
        <begin position="7"/>
        <end position="20"/>
    </location>
</feature>
<evidence type="ECO:0000255" key="1">
    <source>
        <dbReference type="HAMAP-Rule" id="MF_00340"/>
    </source>
</evidence>
<evidence type="ECO:0000256" key="2">
    <source>
        <dbReference type="SAM" id="MobiDB-lite"/>
    </source>
</evidence>
<evidence type="ECO:0000305" key="3"/>
<name>RL321_ENTFA</name>
<protein>
    <recommendedName>
        <fullName evidence="1">Large ribosomal subunit protein bL32A</fullName>
    </recommendedName>
    <alternativeName>
        <fullName evidence="3">50S ribosomal protein L32 1</fullName>
    </alternativeName>
</protein>
<comment type="similarity">
    <text evidence="3">Belongs to the bacterial ribosomal protein bL32 family.</text>
</comment>
<dbReference type="EMBL" id="AF454824">
    <property type="protein sequence ID" value="AAM75276.1"/>
    <property type="molecule type" value="Genomic_DNA"/>
</dbReference>
<dbReference type="EMBL" id="AE016830">
    <property type="protein sequence ID" value="AAO80386.1"/>
    <property type="molecule type" value="Genomic_DNA"/>
</dbReference>
<dbReference type="RefSeq" id="NP_814315.1">
    <property type="nucleotide sequence ID" value="NC_004668.1"/>
</dbReference>
<dbReference type="SMR" id="Q7C3S2"/>
<dbReference type="STRING" id="226185.EF_0544"/>
<dbReference type="EnsemblBacteria" id="AAO80386">
    <property type="protein sequence ID" value="AAO80386"/>
    <property type="gene ID" value="EF_0544"/>
</dbReference>
<dbReference type="KEGG" id="efa:EF0544"/>
<dbReference type="PATRIC" id="fig|226185.45.peg.2482"/>
<dbReference type="eggNOG" id="COG0333">
    <property type="taxonomic scope" value="Bacteria"/>
</dbReference>
<dbReference type="HOGENOM" id="CLU_129084_2_0_9"/>
<dbReference type="Proteomes" id="UP000001415">
    <property type="component" value="Chromosome"/>
</dbReference>
<dbReference type="GO" id="GO:0015934">
    <property type="term" value="C:large ribosomal subunit"/>
    <property type="evidence" value="ECO:0007669"/>
    <property type="project" value="InterPro"/>
</dbReference>
<dbReference type="GO" id="GO:0003735">
    <property type="term" value="F:structural constituent of ribosome"/>
    <property type="evidence" value="ECO:0007669"/>
    <property type="project" value="InterPro"/>
</dbReference>
<dbReference type="GO" id="GO:0006412">
    <property type="term" value="P:translation"/>
    <property type="evidence" value="ECO:0007669"/>
    <property type="project" value="UniProtKB-UniRule"/>
</dbReference>
<dbReference type="HAMAP" id="MF_00340">
    <property type="entry name" value="Ribosomal_bL32"/>
    <property type="match status" value="1"/>
</dbReference>
<dbReference type="InterPro" id="IPR002677">
    <property type="entry name" value="Ribosomal_bL32"/>
</dbReference>
<dbReference type="InterPro" id="IPR044957">
    <property type="entry name" value="Ribosomal_bL32_bact"/>
</dbReference>
<dbReference type="InterPro" id="IPR011332">
    <property type="entry name" value="Ribosomal_zn-bd"/>
</dbReference>
<dbReference type="NCBIfam" id="TIGR01031">
    <property type="entry name" value="rpmF_bact"/>
    <property type="match status" value="1"/>
</dbReference>
<dbReference type="PANTHER" id="PTHR35534">
    <property type="entry name" value="50S RIBOSOMAL PROTEIN L32"/>
    <property type="match status" value="1"/>
</dbReference>
<dbReference type="PANTHER" id="PTHR35534:SF1">
    <property type="entry name" value="LARGE RIBOSOMAL SUBUNIT PROTEIN BL32"/>
    <property type="match status" value="1"/>
</dbReference>
<dbReference type="Pfam" id="PF01783">
    <property type="entry name" value="Ribosomal_L32p"/>
    <property type="match status" value="1"/>
</dbReference>
<dbReference type="SUPFAM" id="SSF57829">
    <property type="entry name" value="Zn-binding ribosomal proteins"/>
    <property type="match status" value="1"/>
</dbReference>
<sequence>MAVPARRTSKTKKRLRRTHEKLKSPEISFDENLGDYRKSHHVSLKGYYGGKKVMDKK</sequence>
<accession>Q7C3S2</accession>
<accession>Q8KU88</accession>
<proteinExistence type="inferred from homology"/>